<accession>Q8Y688</accession>
<proteinExistence type="inferred from homology"/>
<gene>
    <name evidence="1" type="primary">plsX</name>
    <name type="ordered locus">lmo1809</name>
</gene>
<keyword id="KW-0963">Cytoplasm</keyword>
<keyword id="KW-0444">Lipid biosynthesis</keyword>
<keyword id="KW-0443">Lipid metabolism</keyword>
<keyword id="KW-0594">Phospholipid biosynthesis</keyword>
<keyword id="KW-1208">Phospholipid metabolism</keyword>
<keyword id="KW-1185">Reference proteome</keyword>
<keyword id="KW-0808">Transferase</keyword>
<reference key="1">
    <citation type="journal article" date="2001" name="Science">
        <title>Comparative genomics of Listeria species.</title>
        <authorList>
            <person name="Glaser P."/>
            <person name="Frangeul L."/>
            <person name="Buchrieser C."/>
            <person name="Rusniok C."/>
            <person name="Amend A."/>
            <person name="Baquero F."/>
            <person name="Berche P."/>
            <person name="Bloecker H."/>
            <person name="Brandt P."/>
            <person name="Chakraborty T."/>
            <person name="Charbit A."/>
            <person name="Chetouani F."/>
            <person name="Couve E."/>
            <person name="de Daruvar A."/>
            <person name="Dehoux P."/>
            <person name="Domann E."/>
            <person name="Dominguez-Bernal G."/>
            <person name="Duchaud E."/>
            <person name="Durant L."/>
            <person name="Dussurget O."/>
            <person name="Entian K.-D."/>
            <person name="Fsihi H."/>
            <person name="Garcia-del Portillo F."/>
            <person name="Garrido P."/>
            <person name="Gautier L."/>
            <person name="Goebel W."/>
            <person name="Gomez-Lopez N."/>
            <person name="Hain T."/>
            <person name="Hauf J."/>
            <person name="Jackson D."/>
            <person name="Jones L.-M."/>
            <person name="Kaerst U."/>
            <person name="Kreft J."/>
            <person name="Kuhn M."/>
            <person name="Kunst F."/>
            <person name="Kurapkat G."/>
            <person name="Madueno E."/>
            <person name="Maitournam A."/>
            <person name="Mata Vicente J."/>
            <person name="Ng E."/>
            <person name="Nedjari H."/>
            <person name="Nordsiek G."/>
            <person name="Novella S."/>
            <person name="de Pablos B."/>
            <person name="Perez-Diaz J.-C."/>
            <person name="Purcell R."/>
            <person name="Remmel B."/>
            <person name="Rose M."/>
            <person name="Schlueter T."/>
            <person name="Simoes N."/>
            <person name="Tierrez A."/>
            <person name="Vazquez-Boland J.-A."/>
            <person name="Voss H."/>
            <person name="Wehland J."/>
            <person name="Cossart P."/>
        </authorList>
    </citation>
    <scope>NUCLEOTIDE SEQUENCE [LARGE SCALE GENOMIC DNA]</scope>
    <source>
        <strain>ATCC BAA-679 / EGD-e</strain>
    </source>
</reference>
<protein>
    <recommendedName>
        <fullName evidence="1">Phosphate acyltransferase</fullName>
        <ecNumber evidence="1">2.3.1.274</ecNumber>
    </recommendedName>
    <alternativeName>
        <fullName evidence="1">Acyl-ACP phosphotransacylase</fullName>
    </alternativeName>
    <alternativeName>
        <fullName evidence="1">Acyl-[acyl-carrier-protein]--phosphate acyltransferase</fullName>
    </alternativeName>
    <alternativeName>
        <fullName evidence="1">Phosphate-acyl-ACP acyltransferase</fullName>
    </alternativeName>
</protein>
<comment type="function">
    <text evidence="1">Catalyzes the reversible formation of acyl-phosphate (acyl-PO(4)) from acyl-[acyl-carrier-protein] (acyl-ACP). This enzyme utilizes acyl-ACP as fatty acyl donor, but not acyl-CoA.</text>
</comment>
<comment type="catalytic activity">
    <reaction evidence="1">
        <text>a fatty acyl-[ACP] + phosphate = an acyl phosphate + holo-[ACP]</text>
        <dbReference type="Rhea" id="RHEA:42292"/>
        <dbReference type="Rhea" id="RHEA-COMP:9685"/>
        <dbReference type="Rhea" id="RHEA-COMP:14125"/>
        <dbReference type="ChEBI" id="CHEBI:43474"/>
        <dbReference type="ChEBI" id="CHEBI:59918"/>
        <dbReference type="ChEBI" id="CHEBI:64479"/>
        <dbReference type="ChEBI" id="CHEBI:138651"/>
        <dbReference type="EC" id="2.3.1.274"/>
    </reaction>
</comment>
<comment type="pathway">
    <text evidence="1">Lipid metabolism; phospholipid metabolism.</text>
</comment>
<comment type="subunit">
    <text evidence="1">Homodimer. Probably interacts with PlsY.</text>
</comment>
<comment type="subcellular location">
    <subcellularLocation>
        <location evidence="1">Cytoplasm</location>
    </subcellularLocation>
    <text evidence="1">Associated with the membrane possibly through PlsY.</text>
</comment>
<comment type="similarity">
    <text evidence="1">Belongs to the PlsX family.</text>
</comment>
<organism>
    <name type="scientific">Listeria monocytogenes serovar 1/2a (strain ATCC BAA-679 / EGD-e)</name>
    <dbReference type="NCBI Taxonomy" id="169963"/>
    <lineage>
        <taxon>Bacteria</taxon>
        <taxon>Bacillati</taxon>
        <taxon>Bacillota</taxon>
        <taxon>Bacilli</taxon>
        <taxon>Bacillales</taxon>
        <taxon>Listeriaceae</taxon>
        <taxon>Listeria</taxon>
    </lineage>
</organism>
<evidence type="ECO:0000255" key="1">
    <source>
        <dbReference type="HAMAP-Rule" id="MF_00019"/>
    </source>
</evidence>
<feature type="chain" id="PRO_0000189900" description="Phosphate acyltransferase">
    <location>
        <begin position="1"/>
        <end position="337"/>
    </location>
</feature>
<sequence length="337" mass="36407">MKIAVDAMGGDHAPKEIVLGVMKAVAQYKDVEILLFGDETKINEYLTDKTRVKIIHTDEKIESDDEPVRAVKRKKKASMVLAAQAVKDGEADACISAGNTGALMSTGLFVIGRIKGIDRPALAPTLPTVTGKGFVMLDLGANAEAKPEHLLQFGLMGSVYAEKVRKIDRPRVALLNIGTEETKGNDLTKKSFELMKNQDAYEFIGNIEARDLLMDVADVVVTDGFTGNMVLKSIEGTGAAFLSMLKMSLLNGFKNKVAASFLKKDLMALKAKMDYSEYGGACLFGVQAPVVKAHGSSNANGIFTTIRQVREMVEKQVVETIKAEVDKVKVGGTESND</sequence>
<name>PLSX_LISMO</name>
<dbReference type="EC" id="2.3.1.274" evidence="1"/>
<dbReference type="EMBL" id="AL591981">
    <property type="protein sequence ID" value="CAC99887.1"/>
    <property type="molecule type" value="Genomic_DNA"/>
</dbReference>
<dbReference type="PIR" id="AI1300">
    <property type="entry name" value="AI1300"/>
</dbReference>
<dbReference type="RefSeq" id="NP_465334.1">
    <property type="nucleotide sequence ID" value="NC_003210.1"/>
</dbReference>
<dbReference type="RefSeq" id="WP_003723870.1">
    <property type="nucleotide sequence ID" value="NZ_CP149495.1"/>
</dbReference>
<dbReference type="SMR" id="Q8Y688"/>
<dbReference type="STRING" id="169963.gene:17594494"/>
<dbReference type="PaxDb" id="169963-lmo1809"/>
<dbReference type="EnsemblBacteria" id="CAC99887">
    <property type="protein sequence ID" value="CAC99887"/>
    <property type="gene ID" value="CAC99887"/>
</dbReference>
<dbReference type="GeneID" id="985913"/>
<dbReference type="KEGG" id="lmo:lmo1809"/>
<dbReference type="PATRIC" id="fig|169963.11.peg.1854"/>
<dbReference type="eggNOG" id="COG0416">
    <property type="taxonomic scope" value="Bacteria"/>
</dbReference>
<dbReference type="HOGENOM" id="CLU_039379_1_1_9"/>
<dbReference type="OrthoDB" id="9806408at2"/>
<dbReference type="PhylomeDB" id="Q8Y688"/>
<dbReference type="BioCyc" id="LMON169963:LMO1809-MONOMER"/>
<dbReference type="UniPathway" id="UPA00085"/>
<dbReference type="Proteomes" id="UP000000817">
    <property type="component" value="Chromosome"/>
</dbReference>
<dbReference type="GO" id="GO:0005737">
    <property type="term" value="C:cytoplasm"/>
    <property type="evidence" value="ECO:0007669"/>
    <property type="project" value="UniProtKB-SubCell"/>
</dbReference>
<dbReference type="GO" id="GO:0043811">
    <property type="term" value="F:phosphate:acyl-[acyl carrier protein] acyltransferase activity"/>
    <property type="evidence" value="ECO:0007669"/>
    <property type="project" value="UniProtKB-UniRule"/>
</dbReference>
<dbReference type="GO" id="GO:0006633">
    <property type="term" value="P:fatty acid biosynthetic process"/>
    <property type="evidence" value="ECO:0007669"/>
    <property type="project" value="UniProtKB-UniRule"/>
</dbReference>
<dbReference type="GO" id="GO:0008654">
    <property type="term" value="P:phospholipid biosynthetic process"/>
    <property type="evidence" value="ECO:0007669"/>
    <property type="project" value="UniProtKB-KW"/>
</dbReference>
<dbReference type="Gene3D" id="3.40.718.10">
    <property type="entry name" value="Isopropylmalate Dehydrogenase"/>
    <property type="match status" value="1"/>
</dbReference>
<dbReference type="HAMAP" id="MF_00019">
    <property type="entry name" value="PlsX"/>
    <property type="match status" value="1"/>
</dbReference>
<dbReference type="InterPro" id="IPR003664">
    <property type="entry name" value="FA_synthesis"/>
</dbReference>
<dbReference type="InterPro" id="IPR012281">
    <property type="entry name" value="Phospholipid_synth_PlsX-like"/>
</dbReference>
<dbReference type="NCBIfam" id="TIGR00182">
    <property type="entry name" value="plsX"/>
    <property type="match status" value="1"/>
</dbReference>
<dbReference type="PANTHER" id="PTHR30100">
    <property type="entry name" value="FATTY ACID/PHOSPHOLIPID SYNTHESIS PROTEIN PLSX"/>
    <property type="match status" value="1"/>
</dbReference>
<dbReference type="PANTHER" id="PTHR30100:SF1">
    <property type="entry name" value="PHOSPHATE ACYLTRANSFERASE"/>
    <property type="match status" value="1"/>
</dbReference>
<dbReference type="Pfam" id="PF02504">
    <property type="entry name" value="FA_synthesis"/>
    <property type="match status" value="1"/>
</dbReference>
<dbReference type="PIRSF" id="PIRSF002465">
    <property type="entry name" value="Phsphlp_syn_PlsX"/>
    <property type="match status" value="1"/>
</dbReference>
<dbReference type="SUPFAM" id="SSF53659">
    <property type="entry name" value="Isocitrate/Isopropylmalate dehydrogenase-like"/>
    <property type="match status" value="1"/>
</dbReference>